<accession>P35966</accession>
<name>VPU_HV1Y2</name>
<evidence type="ECO:0000255" key="1">
    <source>
        <dbReference type="HAMAP-Rule" id="MF_04082"/>
    </source>
</evidence>
<evidence type="ECO:0000256" key="2">
    <source>
        <dbReference type="SAM" id="MobiDB-lite"/>
    </source>
</evidence>
<evidence type="ECO:0000305" key="3"/>
<organism>
    <name type="scientific">Human immunodeficiency virus type 1 group M subtype B (isolate YU-2)</name>
    <name type="common">HIV-1</name>
    <dbReference type="NCBI Taxonomy" id="362651"/>
    <lineage>
        <taxon>Viruses</taxon>
        <taxon>Riboviria</taxon>
        <taxon>Pararnavirae</taxon>
        <taxon>Artverviricota</taxon>
        <taxon>Revtraviricetes</taxon>
        <taxon>Ortervirales</taxon>
        <taxon>Retroviridae</taxon>
        <taxon>Orthoretrovirinae</taxon>
        <taxon>Lentivirus</taxon>
        <taxon>Human immunodeficiency virus type 1</taxon>
    </lineage>
</organism>
<dbReference type="EMBL" id="M93258">
    <property type="status" value="NOT_ANNOTATED_CDS"/>
    <property type="molecule type" value="Genomic_RNA"/>
</dbReference>
<dbReference type="PIR" id="G44001">
    <property type="entry name" value="G44001"/>
</dbReference>
<dbReference type="Proteomes" id="UP000007419">
    <property type="component" value="Genome"/>
</dbReference>
<dbReference type="GO" id="GO:0033644">
    <property type="term" value="C:host cell membrane"/>
    <property type="evidence" value="ECO:0007669"/>
    <property type="project" value="UniProtKB-SubCell"/>
</dbReference>
<dbReference type="GO" id="GO:0016020">
    <property type="term" value="C:membrane"/>
    <property type="evidence" value="ECO:0007669"/>
    <property type="project" value="UniProtKB-UniRule"/>
</dbReference>
<dbReference type="GO" id="GO:0042609">
    <property type="term" value="F:CD4 receptor binding"/>
    <property type="evidence" value="ECO:0007669"/>
    <property type="project" value="UniProtKB-UniRule"/>
</dbReference>
<dbReference type="GO" id="GO:0005261">
    <property type="term" value="F:monoatomic cation channel activity"/>
    <property type="evidence" value="ECO:0007669"/>
    <property type="project" value="UniProtKB-UniRule"/>
</dbReference>
<dbReference type="GO" id="GO:0032801">
    <property type="term" value="P:receptor catabolic process"/>
    <property type="evidence" value="ECO:0007669"/>
    <property type="project" value="UniProtKB-UniRule"/>
</dbReference>
<dbReference type="GO" id="GO:0052170">
    <property type="term" value="P:symbiont-mediated suppression of host innate immune response"/>
    <property type="evidence" value="ECO:0007669"/>
    <property type="project" value="UniProtKB-KW"/>
</dbReference>
<dbReference type="GO" id="GO:0039502">
    <property type="term" value="P:symbiont-mediated suppression of host type I interferon-mediated signaling pathway"/>
    <property type="evidence" value="ECO:0007669"/>
    <property type="project" value="UniProtKB-UniRule"/>
</dbReference>
<dbReference type="GO" id="GO:0039587">
    <property type="term" value="P:symbiont-mediated-mediated suppression of host tetherin activity"/>
    <property type="evidence" value="ECO:0007669"/>
    <property type="project" value="UniProtKB-UniRule"/>
</dbReference>
<dbReference type="GO" id="GO:0019076">
    <property type="term" value="P:viral release from host cell"/>
    <property type="evidence" value="ECO:0007669"/>
    <property type="project" value="UniProtKB-UniRule"/>
</dbReference>
<dbReference type="Gene3D" id="1.10.195.10">
    <property type="entry name" value="HIV-1 VPU cytoplasmic domain"/>
    <property type="match status" value="1"/>
</dbReference>
<dbReference type="HAMAP" id="MF_04082">
    <property type="entry name" value="HIV_VPU"/>
    <property type="match status" value="1"/>
</dbReference>
<dbReference type="InterPro" id="IPR008187">
    <property type="entry name" value="Vpu"/>
</dbReference>
<dbReference type="InterPro" id="IPR009032">
    <property type="entry name" value="Vpu_cyt_dom_sf"/>
</dbReference>
<dbReference type="Pfam" id="PF00558">
    <property type="entry name" value="Vpu"/>
    <property type="match status" value="1"/>
</dbReference>
<dbReference type="SUPFAM" id="SSF57647">
    <property type="entry name" value="HIV-1 VPU cytoplasmic domain"/>
    <property type="match status" value="1"/>
</dbReference>
<feature type="chain" id="PRO_0000085411" description="Protein Vpu">
    <location>
        <begin position="1"/>
        <end position="81"/>
    </location>
</feature>
<feature type="topological domain" description="Extracellular" evidence="1">
    <location>
        <begin position="1"/>
        <end position="7"/>
    </location>
</feature>
<feature type="transmembrane region" description="Helical" evidence="1">
    <location>
        <begin position="8"/>
        <end position="28"/>
    </location>
</feature>
<feature type="topological domain" description="Cytoplasmic" evidence="1">
    <location>
        <begin position="29"/>
        <end position="81"/>
    </location>
</feature>
<feature type="region of interest" description="Disordered" evidence="2">
    <location>
        <begin position="50"/>
        <end position="81"/>
    </location>
</feature>
<feature type="compositionally biased region" description="Acidic residues" evidence="2">
    <location>
        <begin position="53"/>
        <end position="63"/>
    </location>
</feature>
<feature type="modified residue" description="Phosphoserine; by host CK2" evidence="1">
    <location>
        <position position="53"/>
    </location>
</feature>
<feature type="modified residue" description="Phosphoserine; by host CK2" evidence="1">
    <location>
        <position position="57"/>
    </location>
</feature>
<proteinExistence type="inferred from homology"/>
<gene>
    <name evidence="1" type="primary">vpu</name>
</gene>
<organismHost>
    <name type="scientific">Homo sapiens</name>
    <name type="common">Human</name>
    <dbReference type="NCBI Taxonomy" id="9606"/>
</organismHost>
<protein>
    <recommendedName>
        <fullName evidence="1">Protein Vpu</fullName>
    </recommendedName>
    <alternativeName>
        <fullName evidence="1">U ORF protein</fullName>
    </alternativeName>
    <alternativeName>
        <fullName evidence="1">Viral protein U</fullName>
    </alternativeName>
</protein>
<comment type="function">
    <text evidence="1">Enhances virion budding by targeting host CD4 and Tetherin/BST2 to proteasome degradation. Degradation of CD4 prevents any unwanted premature interactions between viral Env and its host receptor CD4 in the endoplasmic reticulum. Degradation of antiretroviral protein Tetherin/BST2 is important for virion budding, as BST2 tethers new viral particles to the host cell membrane. Mechanistically, Vpu bridges either CD4 or BST2 to BTRC, a substrate recognition subunit of the Skp1/Cullin/F-box protein E3 ubiquitin ligase, induces their ubiquitination and subsequent proteasomal degradation. The alteration of the E3 ligase specificity by Vpu seems to promote the degradation of host IKBKB, leading to NF-kappa-B down-regulation and subsequent apoptosis. Acts as a viroporin that forms an oligomeric ion channel in membranes. Modulates the host DNA repair mechanisms to promote degradation of nuclear viral cDNA in cells that are already productively infected in order to suppress immune sensing and proviral hyper-integration (superinfection). Manipulates PML-NBs and modulates SUMOylation of host BLM protein thereby enhancing its DNA-end processing activity toward viral unintegrated linear DNA. Also inhibits RAD52-mediated homologous repair of viral cDNA, preventing the generation of dead-end circular forms of single copies of the long terminal repeat and permitting sustained nucleolytic attack.</text>
</comment>
<comment type="activity regulation">
    <text evidence="1">Ion channel activity is inhibited by hexamethylene amiloride in vitro.</text>
</comment>
<comment type="subunit">
    <text evidence="1">Homopentamer. Interacts with host CD4 and BRTC; these interactions induce proteasomal degradation of CD4. Interacts with host BST2; this interaction leads to the degradation of host BST2. Interacts with host FBXW11. Interacts with host AP1M1; this interaction plays a role in the mistrafficking and subsequent degradation of host BST2. Interacts with host RANBP2; this interaction allows Vpu to down-regulate host BLM sumoylation.</text>
</comment>
<comment type="subcellular location">
    <subcellularLocation>
        <location evidence="1">Host membrane</location>
        <topology evidence="1">Single-pass type I membrane protein</topology>
    </subcellularLocation>
</comment>
<comment type="domain">
    <text evidence="1">The N-terminus and transmembrane domains are required for self-oligomerization and proper virion budding, whereas the cytoplasmic domain is required for CD4 degradation. The cytoplasmic domain is composed of 2 amphipathic alpha helix that form a U-shape.</text>
</comment>
<comment type="PTM">
    <text evidence="1">Phosphorylated by host CK2. This phosphorylation is necessary for interaction with human BTRC and degradation of CD4.</text>
</comment>
<comment type="miscellaneous">
    <text evidence="1">HIV-1 lineages are divided in three main groups, M (for Major), O (for Outlier), and N (for New, or Non-M, Non-O). The vast majority of strains found worldwide belong to the group M. Group O seems to be endemic to and largely confined to Cameroon and neighboring countries in West Central Africa, where these viruses represent a small minority of HIV-1 strains. The group N is represented by a limited number of isolates from Cameroonian persons. The group M is further subdivided in 9 clades or subtypes (A to D, F to H, J and K).</text>
</comment>
<comment type="similarity">
    <text evidence="1">Belongs to the HIV-1 VPU protein family.</text>
</comment>
<comment type="sequence caution" evidence="3">
    <conflict type="miscellaneous discrepancy">
        <sequence resource="EMBL" id="M93258"/>
    </conflict>
    <text>Initiatory methionine missing possibly due to a sequencing error.</text>
</comment>
<sequence length="81" mass="9229">MQSLQVLAIVALVVATIIAIVVWTIVFIEYRKILRQRKIDRLINRITERAEDSGNESDGDQEELSALVERGHLAPWDVDDL</sequence>
<keyword id="KW-0014">AIDS</keyword>
<keyword id="KW-0053">Apoptosis</keyword>
<keyword id="KW-1043">Host membrane</keyword>
<keyword id="KW-0945">Host-virus interaction</keyword>
<keyword id="KW-1090">Inhibition of host innate immune response by virus</keyword>
<keyword id="KW-1084">Inhibition of host tetherin by virus</keyword>
<keyword id="KW-0407">Ion channel</keyword>
<keyword id="KW-0406">Ion transport</keyword>
<keyword id="KW-0472">Membrane</keyword>
<keyword id="KW-0597">Phosphoprotein</keyword>
<keyword id="KW-0812">Transmembrane</keyword>
<keyword id="KW-1133">Transmembrane helix</keyword>
<keyword id="KW-0813">Transport</keyword>
<keyword id="KW-0899">Viral immunoevasion</keyword>
<reference key="1">
    <citation type="journal article" date="1992" name="J. Virol.">
        <title>Complete nucleotide sequence, genome organization, and biological properties of human immunodeficiency virus type 1 in vivo: evidence for limited defectiveness and complementation.</title>
        <authorList>
            <person name="Li Y."/>
            <person name="Hui H."/>
            <person name="Burgess C.J."/>
            <person name="Price R.W."/>
            <person name="Sharp P.M."/>
            <person name="Hahn B.H."/>
            <person name="Shaw G.M."/>
        </authorList>
    </citation>
    <scope>NUCLEOTIDE SEQUENCE [GENOMIC RNA]</scope>
</reference>